<protein>
    <recommendedName>
        <fullName evidence="1">Polyribonucleotide nucleotidyltransferase</fullName>
        <ecNumber evidence="1">2.7.7.8</ecNumber>
    </recommendedName>
    <alternativeName>
        <fullName evidence="1">Polynucleotide phosphorylase</fullName>
        <shortName evidence="1">PNPase</shortName>
    </alternativeName>
</protein>
<accession>Q8FD87</accession>
<organism>
    <name type="scientific">Escherichia coli O6:H1 (strain CFT073 / ATCC 700928 / UPEC)</name>
    <dbReference type="NCBI Taxonomy" id="199310"/>
    <lineage>
        <taxon>Bacteria</taxon>
        <taxon>Pseudomonadati</taxon>
        <taxon>Pseudomonadota</taxon>
        <taxon>Gammaproteobacteria</taxon>
        <taxon>Enterobacterales</taxon>
        <taxon>Enterobacteriaceae</taxon>
        <taxon>Escherichia</taxon>
    </lineage>
</organism>
<keyword id="KW-0963">Cytoplasm</keyword>
<keyword id="KW-0460">Magnesium</keyword>
<keyword id="KW-0479">Metal-binding</keyword>
<keyword id="KW-0548">Nucleotidyltransferase</keyword>
<keyword id="KW-1185">Reference proteome</keyword>
<keyword id="KW-0694">RNA-binding</keyword>
<keyword id="KW-0808">Transferase</keyword>
<evidence type="ECO:0000255" key="1">
    <source>
        <dbReference type="HAMAP-Rule" id="MF_01595"/>
    </source>
</evidence>
<evidence type="ECO:0000256" key="2">
    <source>
        <dbReference type="SAM" id="MobiDB-lite"/>
    </source>
</evidence>
<evidence type="ECO:0000305" key="3"/>
<gene>
    <name evidence="1" type="primary">pnp</name>
    <name type="ordered locus">c3920</name>
</gene>
<name>PNP_ECOL6</name>
<proteinExistence type="inferred from homology"/>
<feature type="chain" id="PRO_0000329643" description="Polyribonucleotide nucleotidyltransferase">
    <location>
        <begin position="1"/>
        <end position="711"/>
    </location>
</feature>
<feature type="domain" description="KH" evidence="1">
    <location>
        <begin position="553"/>
        <end position="612"/>
    </location>
</feature>
<feature type="domain" description="S1 motif" evidence="1">
    <location>
        <begin position="622"/>
        <end position="690"/>
    </location>
</feature>
<feature type="region of interest" description="Disordered" evidence="2">
    <location>
        <begin position="689"/>
        <end position="711"/>
    </location>
</feature>
<feature type="compositionally biased region" description="Low complexity" evidence="2">
    <location>
        <begin position="694"/>
        <end position="711"/>
    </location>
</feature>
<feature type="binding site" evidence="1">
    <location>
        <position position="486"/>
    </location>
    <ligand>
        <name>Mg(2+)</name>
        <dbReference type="ChEBI" id="CHEBI:18420"/>
    </ligand>
</feature>
<feature type="binding site" evidence="1">
    <location>
        <position position="492"/>
    </location>
    <ligand>
        <name>Mg(2+)</name>
        <dbReference type="ChEBI" id="CHEBI:18420"/>
    </ligand>
</feature>
<comment type="function">
    <text evidence="1">Involved in mRNA degradation. Catalyzes the phosphorolysis of single-stranded polyribonucleotides processively in the 3'- to 5'-direction.</text>
</comment>
<comment type="catalytic activity">
    <reaction evidence="1">
        <text>RNA(n+1) + phosphate = RNA(n) + a ribonucleoside 5'-diphosphate</text>
        <dbReference type="Rhea" id="RHEA:22096"/>
        <dbReference type="Rhea" id="RHEA-COMP:14527"/>
        <dbReference type="Rhea" id="RHEA-COMP:17342"/>
        <dbReference type="ChEBI" id="CHEBI:43474"/>
        <dbReference type="ChEBI" id="CHEBI:57930"/>
        <dbReference type="ChEBI" id="CHEBI:140395"/>
        <dbReference type="EC" id="2.7.7.8"/>
    </reaction>
</comment>
<comment type="cofactor">
    <cofactor evidence="1">
        <name>Mg(2+)</name>
        <dbReference type="ChEBI" id="CHEBI:18420"/>
    </cofactor>
</comment>
<comment type="subunit">
    <text evidence="1">Component of the RNA degradosome, which is a multiprotein complex involved in RNA processing and mRNA degradation.</text>
</comment>
<comment type="subcellular location">
    <subcellularLocation>
        <location evidence="1">Cytoplasm</location>
    </subcellularLocation>
</comment>
<comment type="similarity">
    <text evidence="1">Belongs to the polyribonucleotide nucleotidyltransferase family.</text>
</comment>
<comment type="sequence caution" evidence="3">
    <conflict type="erroneous initiation">
        <sequence resource="EMBL-CDS" id="AAN82361"/>
    </conflict>
</comment>
<sequence>MLNPIVRKFQYGQHTVTLETGMMARQATAAVMVSMDDTAVFVTVVGQKKAKPGQDFFPLTVNYQERTYAAGRIPGSFFRREGRPSEGETLIARLIDRPIRPLFPEGFVNEVQVIATVVSVNPQVNPDIVAMIGASAALSLSGIPFNGPIGAARVGYINDQYVLNPTQDELKESKLDLVVAGTEAAVLMVESEAELLSEDQMLGAVVFGHEQQQVVIQNINELVKEAGKPRWDWQPEPVNEALNARVAALAEARLSDAYRITDKQERYAQVDVIKSETIATLLAEDETLDENELGEILHAIEKNVVRSRVLAGEPRIDGREKDMIRGLDVRTGVLPRTHGSALFTRGETQALVTATLGTARDAQVLDELMGERTDTFLFHYNFPPYSVGETGMVGSPKRREIGHGRLAKRGVLAVMPDMDKFPYTVRVVSEITESNGSSSMASVCGASLALMDAGVPIKAAVAGIAMGLVKEGDNYVVLSDILGDEDHLGDMDFKVAGSRDGISALQMDIKIEGITKEIMQVALNQAKGARLHILGVMEQAINAPRGDISEFAPRIHTIKINPDKIKDVIGKGGSVIRALTEETGTTIEIEDDGTVKIAATDGEKAKHAIRRIEEITAEIEVGRVYNGKVTRIVDFGAFVAIGGGKEGLVHISQIADKRVEKVTDYLQMGQEVPVKVLEVDRQGRIRLSIKEATEQSQPAAAPEAPAAEQGE</sequence>
<dbReference type="EC" id="2.7.7.8" evidence="1"/>
<dbReference type="EMBL" id="AE014075">
    <property type="protein sequence ID" value="AAN82361.1"/>
    <property type="status" value="ALT_INIT"/>
    <property type="molecule type" value="Genomic_DNA"/>
</dbReference>
<dbReference type="RefSeq" id="WP_001298330.1">
    <property type="nucleotide sequence ID" value="NZ_CP051263.1"/>
</dbReference>
<dbReference type="SMR" id="Q8FD87"/>
<dbReference type="STRING" id="199310.c3920"/>
<dbReference type="KEGG" id="ecc:c3920"/>
<dbReference type="eggNOG" id="COG1185">
    <property type="taxonomic scope" value="Bacteria"/>
</dbReference>
<dbReference type="HOGENOM" id="CLU_004217_2_2_6"/>
<dbReference type="Proteomes" id="UP000001410">
    <property type="component" value="Chromosome"/>
</dbReference>
<dbReference type="GO" id="GO:0005829">
    <property type="term" value="C:cytosol"/>
    <property type="evidence" value="ECO:0007669"/>
    <property type="project" value="TreeGrafter"/>
</dbReference>
<dbReference type="GO" id="GO:0000175">
    <property type="term" value="F:3'-5'-RNA exonuclease activity"/>
    <property type="evidence" value="ECO:0007669"/>
    <property type="project" value="TreeGrafter"/>
</dbReference>
<dbReference type="GO" id="GO:0000287">
    <property type="term" value="F:magnesium ion binding"/>
    <property type="evidence" value="ECO:0007669"/>
    <property type="project" value="UniProtKB-UniRule"/>
</dbReference>
<dbReference type="GO" id="GO:0004654">
    <property type="term" value="F:polyribonucleotide nucleotidyltransferase activity"/>
    <property type="evidence" value="ECO:0007669"/>
    <property type="project" value="UniProtKB-UniRule"/>
</dbReference>
<dbReference type="GO" id="GO:0003723">
    <property type="term" value="F:RNA binding"/>
    <property type="evidence" value="ECO:0007669"/>
    <property type="project" value="UniProtKB-UniRule"/>
</dbReference>
<dbReference type="GO" id="GO:0006402">
    <property type="term" value="P:mRNA catabolic process"/>
    <property type="evidence" value="ECO:0007669"/>
    <property type="project" value="UniProtKB-UniRule"/>
</dbReference>
<dbReference type="GO" id="GO:0006396">
    <property type="term" value="P:RNA processing"/>
    <property type="evidence" value="ECO:0007669"/>
    <property type="project" value="InterPro"/>
</dbReference>
<dbReference type="CDD" id="cd02393">
    <property type="entry name" value="KH-I_PNPase"/>
    <property type="match status" value="1"/>
</dbReference>
<dbReference type="CDD" id="cd11363">
    <property type="entry name" value="RNase_PH_PNPase_1"/>
    <property type="match status" value="1"/>
</dbReference>
<dbReference type="CDD" id="cd11364">
    <property type="entry name" value="RNase_PH_PNPase_2"/>
    <property type="match status" value="1"/>
</dbReference>
<dbReference type="CDD" id="cd04472">
    <property type="entry name" value="S1_PNPase"/>
    <property type="match status" value="1"/>
</dbReference>
<dbReference type="FunFam" id="2.40.50.140:FF:000023">
    <property type="entry name" value="Polyribonucleotide nucleotidyltransferase"/>
    <property type="match status" value="1"/>
</dbReference>
<dbReference type="FunFam" id="3.30.1370.10:FF:000001">
    <property type="entry name" value="Polyribonucleotide nucleotidyltransferase"/>
    <property type="match status" value="1"/>
</dbReference>
<dbReference type="FunFam" id="3.30.230.70:FF:000001">
    <property type="entry name" value="Polyribonucleotide nucleotidyltransferase"/>
    <property type="match status" value="1"/>
</dbReference>
<dbReference type="FunFam" id="3.30.230.70:FF:000002">
    <property type="entry name" value="Polyribonucleotide nucleotidyltransferase"/>
    <property type="match status" value="1"/>
</dbReference>
<dbReference type="Gene3D" id="3.30.230.70">
    <property type="entry name" value="GHMP Kinase, N-terminal domain"/>
    <property type="match status" value="2"/>
</dbReference>
<dbReference type="Gene3D" id="3.30.1370.10">
    <property type="entry name" value="K Homology domain, type 1"/>
    <property type="match status" value="1"/>
</dbReference>
<dbReference type="Gene3D" id="2.40.50.140">
    <property type="entry name" value="Nucleic acid-binding proteins"/>
    <property type="match status" value="1"/>
</dbReference>
<dbReference type="HAMAP" id="MF_01595">
    <property type="entry name" value="PNPase"/>
    <property type="match status" value="1"/>
</dbReference>
<dbReference type="InterPro" id="IPR001247">
    <property type="entry name" value="ExoRNase_PH_dom1"/>
</dbReference>
<dbReference type="InterPro" id="IPR015847">
    <property type="entry name" value="ExoRNase_PH_dom2"/>
</dbReference>
<dbReference type="InterPro" id="IPR036345">
    <property type="entry name" value="ExoRNase_PH_dom2_sf"/>
</dbReference>
<dbReference type="InterPro" id="IPR004087">
    <property type="entry name" value="KH_dom"/>
</dbReference>
<dbReference type="InterPro" id="IPR004088">
    <property type="entry name" value="KH_dom_type_1"/>
</dbReference>
<dbReference type="InterPro" id="IPR036612">
    <property type="entry name" value="KH_dom_type_1_sf"/>
</dbReference>
<dbReference type="InterPro" id="IPR012340">
    <property type="entry name" value="NA-bd_OB-fold"/>
</dbReference>
<dbReference type="InterPro" id="IPR012162">
    <property type="entry name" value="PNPase"/>
</dbReference>
<dbReference type="InterPro" id="IPR027408">
    <property type="entry name" value="PNPase/RNase_PH_dom_sf"/>
</dbReference>
<dbReference type="InterPro" id="IPR015848">
    <property type="entry name" value="PNPase_PH_RNA-bd_bac/org-type"/>
</dbReference>
<dbReference type="InterPro" id="IPR036456">
    <property type="entry name" value="PNPase_PH_RNA-bd_sf"/>
</dbReference>
<dbReference type="InterPro" id="IPR020568">
    <property type="entry name" value="Ribosomal_Su5_D2-typ_SF"/>
</dbReference>
<dbReference type="InterPro" id="IPR003029">
    <property type="entry name" value="S1_domain"/>
</dbReference>
<dbReference type="NCBIfam" id="TIGR03591">
    <property type="entry name" value="polynuc_phos"/>
    <property type="match status" value="1"/>
</dbReference>
<dbReference type="NCBIfam" id="NF008805">
    <property type="entry name" value="PRK11824.1"/>
    <property type="match status" value="1"/>
</dbReference>
<dbReference type="PANTHER" id="PTHR11252">
    <property type="entry name" value="POLYRIBONUCLEOTIDE NUCLEOTIDYLTRANSFERASE"/>
    <property type="match status" value="1"/>
</dbReference>
<dbReference type="PANTHER" id="PTHR11252:SF0">
    <property type="entry name" value="POLYRIBONUCLEOTIDE NUCLEOTIDYLTRANSFERASE 1, MITOCHONDRIAL"/>
    <property type="match status" value="1"/>
</dbReference>
<dbReference type="Pfam" id="PF00013">
    <property type="entry name" value="KH_1"/>
    <property type="match status" value="1"/>
</dbReference>
<dbReference type="Pfam" id="PF03726">
    <property type="entry name" value="PNPase"/>
    <property type="match status" value="1"/>
</dbReference>
<dbReference type="Pfam" id="PF01138">
    <property type="entry name" value="RNase_PH"/>
    <property type="match status" value="2"/>
</dbReference>
<dbReference type="Pfam" id="PF03725">
    <property type="entry name" value="RNase_PH_C"/>
    <property type="match status" value="2"/>
</dbReference>
<dbReference type="Pfam" id="PF00575">
    <property type="entry name" value="S1"/>
    <property type="match status" value="1"/>
</dbReference>
<dbReference type="PIRSF" id="PIRSF005499">
    <property type="entry name" value="PNPase"/>
    <property type="match status" value="1"/>
</dbReference>
<dbReference type="SMART" id="SM00322">
    <property type="entry name" value="KH"/>
    <property type="match status" value="1"/>
</dbReference>
<dbReference type="SMART" id="SM00316">
    <property type="entry name" value="S1"/>
    <property type="match status" value="1"/>
</dbReference>
<dbReference type="SUPFAM" id="SSF54791">
    <property type="entry name" value="Eukaryotic type KH-domain (KH-domain type I)"/>
    <property type="match status" value="1"/>
</dbReference>
<dbReference type="SUPFAM" id="SSF50249">
    <property type="entry name" value="Nucleic acid-binding proteins"/>
    <property type="match status" value="1"/>
</dbReference>
<dbReference type="SUPFAM" id="SSF46915">
    <property type="entry name" value="Polynucleotide phosphorylase/guanosine pentaphosphate synthase (PNPase/GPSI), domain 3"/>
    <property type="match status" value="1"/>
</dbReference>
<dbReference type="SUPFAM" id="SSF55666">
    <property type="entry name" value="Ribonuclease PH domain 2-like"/>
    <property type="match status" value="2"/>
</dbReference>
<dbReference type="SUPFAM" id="SSF54211">
    <property type="entry name" value="Ribosomal protein S5 domain 2-like"/>
    <property type="match status" value="2"/>
</dbReference>
<dbReference type="PROSITE" id="PS50084">
    <property type="entry name" value="KH_TYPE_1"/>
    <property type="match status" value="1"/>
</dbReference>
<dbReference type="PROSITE" id="PS50126">
    <property type="entry name" value="S1"/>
    <property type="match status" value="1"/>
</dbReference>
<reference key="1">
    <citation type="journal article" date="2002" name="Proc. Natl. Acad. Sci. U.S.A.">
        <title>Extensive mosaic structure revealed by the complete genome sequence of uropathogenic Escherichia coli.</title>
        <authorList>
            <person name="Welch R.A."/>
            <person name="Burland V."/>
            <person name="Plunkett G. III"/>
            <person name="Redford P."/>
            <person name="Roesch P."/>
            <person name="Rasko D."/>
            <person name="Buckles E.L."/>
            <person name="Liou S.-R."/>
            <person name="Boutin A."/>
            <person name="Hackett J."/>
            <person name="Stroud D."/>
            <person name="Mayhew G.F."/>
            <person name="Rose D.J."/>
            <person name="Zhou S."/>
            <person name="Schwartz D.C."/>
            <person name="Perna N.T."/>
            <person name="Mobley H.L.T."/>
            <person name="Donnenberg M.S."/>
            <person name="Blattner F.R."/>
        </authorList>
    </citation>
    <scope>NUCLEOTIDE SEQUENCE [LARGE SCALE GENOMIC DNA]</scope>
    <source>
        <strain>CFT073 / ATCC 700928 / UPEC</strain>
    </source>
</reference>